<organismHost>
    <name type="scientific">Aves</name>
    <dbReference type="NCBI Taxonomy" id="8782"/>
</organismHost>
<organismHost>
    <name type="scientific">Cetacea</name>
    <name type="common">whales</name>
    <dbReference type="NCBI Taxonomy" id="9721"/>
</organismHost>
<organismHost>
    <name type="scientific">Homo sapiens</name>
    <name type="common">Human</name>
    <dbReference type="NCBI Taxonomy" id="9606"/>
</organismHost>
<organismHost>
    <name type="scientific">Phocidae</name>
    <name type="common">true seals</name>
    <dbReference type="NCBI Taxonomy" id="9709"/>
</organismHost>
<organismHost>
    <name type="scientific">Sus scrofa</name>
    <name type="common">Pig</name>
    <dbReference type="NCBI Taxonomy" id="9823"/>
</organismHost>
<sequence>MASQGTKRSYEQMETDGERQNATEIRASVGKMIDGIGRFYIQMCTELKLSDYEGRLIQNSLTIERMVLSAFDERRNRYLEEHPSAGKDPKKTGGPIYKRVDGKWMRELVLYDKEEIRRIWRQANNGDDATRGLTHMMIWHSNLNDTTYQRTRALVRTGMDPRMCSLMQGSTLPRRSGAAGAAVKGVGTMVMELIRMIKRGINDRNFWRGENGRKTRIAYERMCNILKGKFQTAAQRAMMDQVRESRNPGNAEYEDLIFLARSALILRGSVAHKSCLPACVYGPAVASGYDFEKEGYSLVGIDPFKLLQNSQVYSLIRPNENPAHKSQLVWMACNSAAFEDLRLLSFIRGTKVFPRGKLSTRGVQIASNENMDTMESSTLELRSRYWAIRTRSGGNTNQQRASAGQISVQPAFSVQKNLPFDKSTIMAAFTGNTEGRTSDMRAEIIRMMEGAKPEEVSFRGRGVFELSDEKATNPIVPSFDMSNEGSYFFGDNAEEYDN</sequence>
<gene>
    <name evidence="1" type="primary">NP</name>
</gene>
<feature type="chain" id="PRO_0000079079" description="Nucleoprotein">
    <location>
        <begin position="1"/>
        <end position="498"/>
    </location>
</feature>
<feature type="region of interest" description="Disordered" evidence="2">
    <location>
        <begin position="1"/>
        <end position="21"/>
    </location>
</feature>
<feature type="short sequence motif" description="Unconventional nuclear localization signal" evidence="1">
    <location>
        <begin position="1"/>
        <end position="18"/>
    </location>
</feature>
<feature type="short sequence motif" description="Bipartite nuclear localization signal" evidence="1">
    <location>
        <begin position="198"/>
        <end position="216"/>
    </location>
</feature>
<feature type="compositionally biased region" description="Basic and acidic residues" evidence="2">
    <location>
        <begin position="8"/>
        <end position="21"/>
    </location>
</feature>
<evidence type="ECO:0000255" key="1">
    <source>
        <dbReference type="HAMAP-Rule" id="MF_04070"/>
    </source>
</evidence>
<evidence type="ECO:0000256" key="2">
    <source>
        <dbReference type="SAM" id="MobiDB-lite"/>
    </source>
</evidence>
<accession>Q07531</accession>
<keyword id="KW-0167">Capsid protein</keyword>
<keyword id="KW-1139">Helical capsid protein</keyword>
<keyword id="KW-1048">Host nucleus</keyword>
<keyword id="KW-0945">Host-virus interaction</keyword>
<keyword id="KW-0687">Ribonucleoprotein</keyword>
<keyword id="KW-0694">RNA-binding</keyword>
<keyword id="KW-0543">Viral nucleoprotein</keyword>
<keyword id="KW-1163">Viral penetration into host nucleus</keyword>
<keyword id="KW-0946">Virion</keyword>
<keyword id="KW-1160">Virus entry into host cell</keyword>
<comment type="function">
    <text evidence="1">Encapsidates the negative strand viral RNA, protecting it from nucleases. The encapsidated genomic RNA is termed the ribonucleoprotein (RNP) and serves as template for transcription and replication. The RNP needs to be localized in the host nucleus to start an infectious cycle, but is too large to diffuse through the nuclear pore complex. NP comprises at least 2 nuclear localization signals that are responsible for the active RNP import into the nucleus through cellular importin alpha/beta pathway. Later in the infection, nclear export of RNPs are mediated through viral proteins NEP interacting with M1 which binds nucleoproteins. It is possible that nucleoprotein binds directly host exportin-1/XPO1 and plays an active role in RNPs nuclear export. M1 interaction with RNP seems to hide nucleoprotein's nuclear localization signals. Soon after a virion infects a new cell, M1 dissociates from the RNP under acidification of the virion driven by M2 protein. Dissociation of M1 from RNP unmasks nucleoprotein's nuclear localization signals, targeting the RNP to the nucleus.</text>
</comment>
<comment type="subunit">
    <text evidence="1">Homomultimerizes to form the nucleocapsid. May bind host exportin-1/XPO1. Binds to viral genomic RNA. Protein-RNA contacts are mediated by a combination of electrostatic interactions between positively charged residues and the phosphate backbone and planar interactions between aromatic side chains and bases.</text>
</comment>
<comment type="subcellular location">
    <subcellularLocation>
        <location evidence="1">Virion</location>
    </subcellularLocation>
    <subcellularLocation>
        <location evidence="1">Host nucleus</location>
    </subcellularLocation>
</comment>
<comment type="PTM">
    <text evidence="1">Late in virus-infected cells, may be cleaved from a 56-kDa protein to a 53-kDa protein by a cellular caspase. This cleavage might be a marker for the onset of apoptosis in infected cells or have a specific function in virus host interaction.</text>
</comment>
<comment type="similarity">
    <text evidence="1">Belongs to the influenza viruses nucleoprotein family.</text>
</comment>
<proteinExistence type="inferred from homology"/>
<name>NCAP_I73A2</name>
<reference key="1">
    <citation type="journal article" date="1993" name="J. Virol.">
        <title>Analysis of the evolution and variation of the human influenza A virus nucleoprotein gene from 1933 to 1990.</title>
        <authorList>
            <person name="Shu L.L."/>
            <person name="Bean W.J."/>
            <person name="Webster R.G."/>
        </authorList>
    </citation>
    <scope>NUCLEOTIDE SEQUENCE [GENOMIC RNA]</scope>
</reference>
<dbReference type="EMBL" id="L07347">
    <property type="protein sequence ID" value="AAA51501.1"/>
    <property type="molecule type" value="Genomic_RNA"/>
</dbReference>
<dbReference type="SMR" id="Q07531"/>
<dbReference type="GO" id="GO:0019029">
    <property type="term" value="C:helical viral capsid"/>
    <property type="evidence" value="ECO:0007669"/>
    <property type="project" value="UniProtKB-UniRule"/>
</dbReference>
<dbReference type="GO" id="GO:0043657">
    <property type="term" value="C:host cell"/>
    <property type="evidence" value="ECO:0007669"/>
    <property type="project" value="GOC"/>
</dbReference>
<dbReference type="GO" id="GO:0042025">
    <property type="term" value="C:host cell nucleus"/>
    <property type="evidence" value="ECO:0007669"/>
    <property type="project" value="UniProtKB-SubCell"/>
</dbReference>
<dbReference type="GO" id="GO:1990904">
    <property type="term" value="C:ribonucleoprotein complex"/>
    <property type="evidence" value="ECO:0007669"/>
    <property type="project" value="UniProtKB-KW"/>
</dbReference>
<dbReference type="GO" id="GO:0019013">
    <property type="term" value="C:viral nucleocapsid"/>
    <property type="evidence" value="ECO:0007669"/>
    <property type="project" value="UniProtKB-UniRule"/>
</dbReference>
<dbReference type="GO" id="GO:0003723">
    <property type="term" value="F:RNA binding"/>
    <property type="evidence" value="ECO:0007669"/>
    <property type="project" value="UniProtKB-UniRule"/>
</dbReference>
<dbReference type="GO" id="GO:0005198">
    <property type="term" value="F:structural molecule activity"/>
    <property type="evidence" value="ECO:0007669"/>
    <property type="project" value="UniProtKB-UniRule"/>
</dbReference>
<dbReference type="GO" id="GO:0046718">
    <property type="term" value="P:symbiont entry into host cell"/>
    <property type="evidence" value="ECO:0007669"/>
    <property type="project" value="UniProtKB-KW"/>
</dbReference>
<dbReference type="GO" id="GO:0075732">
    <property type="term" value="P:viral penetration into host nucleus"/>
    <property type="evidence" value="ECO:0007669"/>
    <property type="project" value="UniProtKB-UniRule"/>
</dbReference>
<dbReference type="HAMAP" id="MF_04070">
    <property type="entry name" value="INFV_NCAP"/>
    <property type="match status" value="1"/>
</dbReference>
<dbReference type="InterPro" id="IPR002141">
    <property type="entry name" value="Flu_NP"/>
</dbReference>
<dbReference type="Pfam" id="PF00506">
    <property type="entry name" value="Flu_NP"/>
    <property type="match status" value="1"/>
</dbReference>
<dbReference type="SUPFAM" id="SSF161003">
    <property type="entry name" value="flu NP-like"/>
    <property type="match status" value="1"/>
</dbReference>
<protein>
    <recommendedName>
        <fullName evidence="1">Nucleoprotein</fullName>
    </recommendedName>
    <alternativeName>
        <fullName evidence="1">Nucleocapsid protein</fullName>
        <shortName evidence="1">Protein N</shortName>
    </alternativeName>
</protein>
<organism>
    <name type="scientific">Influenza A virus (strain A/Memphis/4/1973 H3N2)</name>
    <dbReference type="NCBI Taxonomy" id="38973"/>
    <lineage>
        <taxon>Viruses</taxon>
        <taxon>Riboviria</taxon>
        <taxon>Orthornavirae</taxon>
        <taxon>Negarnaviricota</taxon>
        <taxon>Polyploviricotina</taxon>
        <taxon>Insthoviricetes</taxon>
        <taxon>Articulavirales</taxon>
        <taxon>Orthomyxoviridae</taxon>
        <taxon>Alphainfluenzavirus</taxon>
        <taxon>Alphainfluenzavirus influenzae</taxon>
        <taxon>Influenza A virus</taxon>
    </lineage>
</organism>